<dbReference type="EMBL" id="D13127">
    <property type="protein sequence ID" value="BAA02429.1"/>
    <property type="molecule type" value="mRNA"/>
</dbReference>
<dbReference type="EMBL" id="BC060544">
    <property type="protein sequence ID" value="AAH60544.1"/>
    <property type="molecule type" value="mRNA"/>
</dbReference>
<dbReference type="PIR" id="S30181">
    <property type="entry name" value="S30181"/>
</dbReference>
<dbReference type="RefSeq" id="NP_620238.1">
    <property type="nucleotide sequence ID" value="NM_138883.1"/>
</dbReference>
<dbReference type="SMR" id="Q06647"/>
<dbReference type="BioGRID" id="251369">
    <property type="interactions" value="5"/>
</dbReference>
<dbReference type="CORUM" id="Q06647"/>
<dbReference type="FunCoup" id="Q06647">
    <property type="interactions" value="2542"/>
</dbReference>
<dbReference type="IntAct" id="Q06647">
    <property type="interactions" value="9"/>
</dbReference>
<dbReference type="MINT" id="Q06647"/>
<dbReference type="STRING" id="10116.ENSRNOP00000002732"/>
<dbReference type="CarbonylDB" id="Q06647"/>
<dbReference type="GlyGen" id="Q06647">
    <property type="glycosylation" value="4 sites, 1 O-linked glycan (4 sites)"/>
</dbReference>
<dbReference type="iPTMnet" id="Q06647"/>
<dbReference type="PhosphoSitePlus" id="Q06647"/>
<dbReference type="SwissPalm" id="Q06647"/>
<dbReference type="jPOST" id="Q06647"/>
<dbReference type="PaxDb" id="10116-ENSRNOP00000002732"/>
<dbReference type="Ensembl" id="ENSRNOT00000002732.7">
    <property type="protein sequence ID" value="ENSRNOP00000002732.3"/>
    <property type="gene ID" value="ENSRNOG00000001991.8"/>
</dbReference>
<dbReference type="GeneID" id="192241"/>
<dbReference type="KEGG" id="rno:192241"/>
<dbReference type="UCSC" id="RGD:621379">
    <property type="organism name" value="rat"/>
</dbReference>
<dbReference type="AGR" id="RGD:621379"/>
<dbReference type="CTD" id="539"/>
<dbReference type="RGD" id="621379">
    <property type="gene designation" value="Atp5po"/>
</dbReference>
<dbReference type="eggNOG" id="KOG1662">
    <property type="taxonomic scope" value="Eukaryota"/>
</dbReference>
<dbReference type="GeneTree" id="ENSGT00390000015060"/>
<dbReference type="HOGENOM" id="CLU_085114_0_0_1"/>
<dbReference type="InParanoid" id="Q06647"/>
<dbReference type="OrthoDB" id="31490at9989"/>
<dbReference type="PhylomeDB" id="Q06647"/>
<dbReference type="TreeFam" id="TF106241"/>
<dbReference type="Reactome" id="R-RNO-163210">
    <property type="pathway name" value="Formation of ATP by chemiosmotic coupling"/>
</dbReference>
<dbReference type="Reactome" id="R-RNO-8949613">
    <property type="pathway name" value="Cristae formation"/>
</dbReference>
<dbReference type="Reactome" id="R-RNO-9837999">
    <property type="pathway name" value="Mitochondrial protein degradation"/>
</dbReference>
<dbReference type="PRO" id="PR:Q06647"/>
<dbReference type="Proteomes" id="UP000002494">
    <property type="component" value="Chromosome 11"/>
</dbReference>
<dbReference type="Bgee" id="ENSRNOG00000001991">
    <property type="expression patterns" value="Expressed in heart and 20 other cell types or tissues"/>
</dbReference>
<dbReference type="GO" id="GO:0009986">
    <property type="term" value="C:cell surface"/>
    <property type="evidence" value="ECO:0000314"/>
    <property type="project" value="RGD"/>
</dbReference>
<dbReference type="GO" id="GO:0005743">
    <property type="term" value="C:mitochondrial inner membrane"/>
    <property type="evidence" value="ECO:0007669"/>
    <property type="project" value="UniProtKB-SubCell"/>
</dbReference>
<dbReference type="GO" id="GO:0005739">
    <property type="term" value="C:mitochondrion"/>
    <property type="evidence" value="ECO:0000266"/>
    <property type="project" value="RGD"/>
</dbReference>
<dbReference type="GO" id="GO:0005886">
    <property type="term" value="C:plasma membrane"/>
    <property type="evidence" value="ECO:0000266"/>
    <property type="project" value="RGD"/>
</dbReference>
<dbReference type="GO" id="GO:0045259">
    <property type="term" value="C:proton-transporting ATP synthase complex"/>
    <property type="evidence" value="ECO:0000314"/>
    <property type="project" value="UniProtKB"/>
</dbReference>
<dbReference type="GO" id="GO:1903924">
    <property type="term" value="F:estradiol binding"/>
    <property type="evidence" value="ECO:0000314"/>
    <property type="project" value="RGD"/>
</dbReference>
<dbReference type="GO" id="GO:0044877">
    <property type="term" value="F:protein-containing complex binding"/>
    <property type="evidence" value="ECO:0000314"/>
    <property type="project" value="RGD"/>
</dbReference>
<dbReference type="GO" id="GO:0046933">
    <property type="term" value="F:proton-transporting ATP synthase activity, rotational mechanism"/>
    <property type="evidence" value="ECO:0007669"/>
    <property type="project" value="Ensembl"/>
</dbReference>
<dbReference type="GO" id="GO:0071320">
    <property type="term" value="P:cellular response to cAMP"/>
    <property type="evidence" value="ECO:0000270"/>
    <property type="project" value="RGD"/>
</dbReference>
<dbReference type="GO" id="GO:0071345">
    <property type="term" value="P:cellular response to cytokine stimulus"/>
    <property type="evidence" value="ECO:0000270"/>
    <property type="project" value="RGD"/>
</dbReference>
<dbReference type="GO" id="GO:0042776">
    <property type="term" value="P:proton motive force-driven mitochondrial ATP synthesis"/>
    <property type="evidence" value="ECO:0000266"/>
    <property type="project" value="RGD"/>
</dbReference>
<dbReference type="FunFam" id="1.10.520.20:FF:000002">
    <property type="entry name" value="ATP synthase subunit O, mitochondrial"/>
    <property type="match status" value="1"/>
</dbReference>
<dbReference type="Gene3D" id="1.10.520.20">
    <property type="entry name" value="N-terminal domain of the delta subunit of the F1F0-ATP synthase"/>
    <property type="match status" value="1"/>
</dbReference>
<dbReference type="HAMAP" id="MF_01416">
    <property type="entry name" value="ATP_synth_delta_bact"/>
    <property type="match status" value="1"/>
</dbReference>
<dbReference type="InterPro" id="IPR026015">
    <property type="entry name" value="ATP_synth_OSCP/delta_N_sf"/>
</dbReference>
<dbReference type="InterPro" id="IPR020781">
    <property type="entry name" value="ATPase_OSCP/d_CS"/>
</dbReference>
<dbReference type="InterPro" id="IPR000711">
    <property type="entry name" value="ATPase_OSCP/dsu"/>
</dbReference>
<dbReference type="NCBIfam" id="TIGR01145">
    <property type="entry name" value="ATP_synt_delta"/>
    <property type="match status" value="1"/>
</dbReference>
<dbReference type="PANTHER" id="PTHR11910">
    <property type="entry name" value="ATP SYNTHASE DELTA CHAIN"/>
    <property type="match status" value="1"/>
</dbReference>
<dbReference type="Pfam" id="PF00213">
    <property type="entry name" value="OSCP"/>
    <property type="match status" value="1"/>
</dbReference>
<dbReference type="PRINTS" id="PR00125">
    <property type="entry name" value="ATPASEDELTA"/>
</dbReference>
<dbReference type="SUPFAM" id="SSF47928">
    <property type="entry name" value="N-terminal domain of the delta subunit of the F1F0-ATP synthase"/>
    <property type="match status" value="1"/>
</dbReference>
<dbReference type="PROSITE" id="PS00389">
    <property type="entry name" value="ATPASE_DELTA"/>
    <property type="match status" value="1"/>
</dbReference>
<reference key="1">
    <citation type="journal article" date="1993" name="Biochim. Biophys. Acta">
        <title>Molecular cloning and sequence of cDNAs for the import precursors of oligomycin sensitivity conferring protein, ATPase inhibitor protein, and subunit c of H(+)-ATP synthase in rat mitochondria.</title>
        <authorList>
            <person name="Higuti T."/>
            <person name="Kuroiwa K."/>
            <person name="Kawamura Y."/>
            <person name="Morimoto K."/>
            <person name="Tsujita H."/>
        </authorList>
    </citation>
    <scope>NUCLEOTIDE SEQUENCE [MRNA]</scope>
    <source>
        <tissue>Hepatocyte</tissue>
    </source>
</reference>
<reference key="2">
    <citation type="journal article" date="2004" name="Genome Res.">
        <title>The status, quality, and expansion of the NIH full-length cDNA project: the Mammalian Gene Collection (MGC).</title>
        <authorList>
            <consortium name="The MGC Project Team"/>
        </authorList>
    </citation>
    <scope>NUCLEOTIDE SEQUENCE [LARGE SCALE MRNA]</scope>
    <source>
        <tissue>Pituitary</tissue>
    </source>
</reference>
<reference key="3">
    <citation type="submission" date="2007-07" db="UniProtKB">
        <authorList>
            <person name="Lubec G."/>
            <person name="Kang S.U."/>
        </authorList>
    </citation>
    <scope>PROTEIN SEQUENCE OF 27-40</scope>
    <scope>IDENTIFICATION BY MASS SPECTROMETRY</scope>
    <source>
        <strain>Sprague-Dawley</strain>
        <tissue>Brain</tissue>
    </source>
</reference>
<reference key="4">
    <citation type="journal article" date="2007" name="Mol. Cell. Proteomics">
        <title>Identification of two proteins associated with mammalian ATP synthase.</title>
        <authorList>
            <person name="Meyer B."/>
            <person name="Wittig I."/>
            <person name="Trifilieff E."/>
            <person name="Karas M."/>
            <person name="Schaegger H."/>
        </authorList>
    </citation>
    <scope>IDENTIFICATION BY MASS SPECTROMETRY</scope>
    <scope>IDENTIFICATION IN THE ATP SYNTHASE COMPLEX</scope>
</reference>
<reference key="5">
    <citation type="journal article" date="2009" name="Reproduction">
        <title>Identification of novel immunodominant epididymal sperm proteins using combinatorial approach.</title>
        <authorList>
            <person name="Khan S.A."/>
            <person name="Suryawanshi A.R."/>
            <person name="Ranpura S.A."/>
            <person name="Jadhav S.V."/>
            <person name="Khole V.V."/>
        </authorList>
    </citation>
    <scope>IDENTIFICATION BY MASS SPECTROMETRY</scope>
    <scope>TISSUE SPECIFICITY</scope>
    <source>
        <strain>Holtzman</strain>
        <tissue>Epididymis</tissue>
        <tissue>Sperm</tissue>
    </source>
</reference>
<comment type="function">
    <text evidence="2 3 4">Subunit OSCP, of the mitochondrial membrane ATP synthase complex (F(1)F(0) ATP synthase or Complex V) that produces ATP from ADP in the presence of a proton gradient across the membrane which is generated by electron transport complexes of the respiratory chain. ATP synthase complex consist of a soluble F(1) head domain - the catalytic core - and a membrane F(1) domain - the membrane proton channel. These two domains are linked by a central stalk rotating inside the F(1) region and a stationary peripheral stalk. During catalysis, ATP synthesis in the catalytic domain of F(1) is coupled via a rotary mechanism of the central stalk subunits to proton translocation (By similarity). In vivo, can only synthesize ATP although its ATP hydrolase activity can be activated artificially in vitro (By similarity). Part of the complex F(0) domain (By similarity). Part of the complex F(0) domain and the peripheric stalk, which acts as a stator to hold the catalytic alpha(3)beta(3) subcomplex and subunit a/ATP6 static relative to the rotary elements (By similarity).</text>
</comment>
<comment type="subunit">
    <text evidence="4 6">Component of the ATP synthase complex composed at least of ATP5F1A/subunit alpha, ATP5F1B/subunit beta, ATP5MC1/subunit c (homooctomer), MT-ATP6/subunit a, MT-ATP8/subunit 8, ATP5ME/subunit e, ATP5MF/subunit f, ATP5MG/subunit g, ATP5MK/subunit k, ATP5MJ/subunit j, ATP5F1C/subunit gamma, ATP5F1D/subunit delta, ATP5F1E/subunit epsilon, ATP5PF/subunit F6, ATP5PB/subunit b, ATP5PD/subunit d, ATP5PO/subunit OSCP (PubMed:17575325). ATP synthase complex consists of a soluble F(1) head domain (subunits alpha(3) and beta(3)) - the catalytic core - and a membrane F(0) domain - the membrane proton channel (subunits c, a, 8, e, f, g, k and j). These two domains are linked by a central stalk (subunits gamma, delta, and epsilon) rotating inside the F1 region and a stationary peripheral stalk (subunits F6, b, d, and OSCP) (By similarity).</text>
</comment>
<comment type="subcellular location">
    <subcellularLocation>
        <location evidence="1">Mitochondrion</location>
    </subcellularLocation>
    <subcellularLocation>
        <location evidence="1">Mitochondrion inner membrane</location>
    </subcellularLocation>
</comment>
<comment type="tissue specificity">
    <text evidence="7">Expressed by the principal cells of the epididymis. Detected in flagella of epididymal sperm (at protein level).</text>
</comment>
<comment type="PTM">
    <text evidence="4">In response to mitochondrial stress, the precursor protein is ubiquitinated by the SIFI complex in the cytoplasm before mitochondrial import, leading to its degradation. Within the SIFI complex, UBR4 initiates ubiquitin chain that are further elongated or branched by KCMF1.</text>
</comment>
<comment type="similarity">
    <text evidence="8">Belongs to the ATPase delta chain family.</text>
</comment>
<organism>
    <name type="scientific">Rattus norvegicus</name>
    <name type="common">Rat</name>
    <dbReference type="NCBI Taxonomy" id="10116"/>
    <lineage>
        <taxon>Eukaryota</taxon>
        <taxon>Metazoa</taxon>
        <taxon>Chordata</taxon>
        <taxon>Craniata</taxon>
        <taxon>Vertebrata</taxon>
        <taxon>Euteleostomi</taxon>
        <taxon>Mammalia</taxon>
        <taxon>Eutheria</taxon>
        <taxon>Euarchontoglires</taxon>
        <taxon>Glires</taxon>
        <taxon>Rodentia</taxon>
        <taxon>Myomorpha</taxon>
        <taxon>Muroidea</taxon>
        <taxon>Muridae</taxon>
        <taxon>Murinae</taxon>
        <taxon>Rattus</taxon>
    </lineage>
</organism>
<name>ATPO_RAT</name>
<protein>
    <recommendedName>
        <fullName evidence="8">ATP synthase peripheral stalk subunit OSCP, mitochondrial</fullName>
    </recommendedName>
    <alternativeName>
        <fullName evidence="8">ATP synthase subunit O</fullName>
    </alternativeName>
    <alternativeName>
        <fullName>Oligomycin sensitivity conferral protein</fullName>
        <shortName>OSCP</shortName>
    </alternativeName>
    <alternativeName>
        <fullName>Sperm flagella protein 4</fullName>
    </alternativeName>
</protein>
<proteinExistence type="evidence at protein level"/>
<keyword id="KW-0007">Acetylation</keyword>
<keyword id="KW-0066">ATP synthesis</keyword>
<keyword id="KW-0903">Direct protein sequencing</keyword>
<keyword id="KW-0375">Hydrogen ion transport</keyword>
<keyword id="KW-0406">Ion transport</keyword>
<keyword id="KW-0472">Membrane</keyword>
<keyword id="KW-0496">Mitochondrion</keyword>
<keyword id="KW-0999">Mitochondrion inner membrane</keyword>
<keyword id="KW-1185">Reference proteome</keyword>
<keyword id="KW-0809">Transit peptide</keyword>
<keyword id="KW-0813">Transport</keyword>
<keyword id="KW-0832">Ubl conjugation</keyword>
<sequence length="213" mass="23398">MAAPATSVLSRQVRSFSTSVVRPFSKLVRPPVQVYGIEGRYATALYSAASKQKRLDQVEKELLRVGQLLKDPKVSLAVLNPYIKRSIKVKSLKDITTKEKFSPLTANLMNLLAENGRLGNTQGVISAFSTIMSVHRGEVPCTVTTAFPLDEAVLSELKTVLNSFLSKGQILNLEVKTDPSIMGGMIVRIGEKYVDMSAKSKIQKLSKAMRDLL</sequence>
<evidence type="ECO:0000250" key="1"/>
<evidence type="ECO:0000250" key="2">
    <source>
        <dbReference type="UniProtKB" id="P13621"/>
    </source>
</evidence>
<evidence type="ECO:0000250" key="3">
    <source>
        <dbReference type="UniProtKB" id="P19483"/>
    </source>
</evidence>
<evidence type="ECO:0000250" key="4">
    <source>
        <dbReference type="UniProtKB" id="P48047"/>
    </source>
</evidence>
<evidence type="ECO:0000250" key="5">
    <source>
        <dbReference type="UniProtKB" id="Q9DB20"/>
    </source>
</evidence>
<evidence type="ECO:0000269" key="6">
    <source>
    </source>
</evidence>
<evidence type="ECO:0000269" key="7">
    <source>
    </source>
</evidence>
<evidence type="ECO:0000305" key="8"/>
<evidence type="ECO:0000312" key="9">
    <source>
        <dbReference type="RGD" id="621379"/>
    </source>
</evidence>
<feature type="transit peptide" description="Mitochondrion">
    <location>
        <begin position="1"/>
        <end position="23"/>
    </location>
</feature>
<feature type="chain" id="PRO_0000002649" description="ATP synthase peripheral stalk subunit OSCP, mitochondrial">
    <location>
        <begin position="24"/>
        <end position="213"/>
    </location>
</feature>
<feature type="short sequence motif" description="SIFI-degron" evidence="4">
    <location>
        <begin position="5"/>
        <end position="23"/>
    </location>
</feature>
<feature type="modified residue" description="N6-acetyllysine" evidence="5">
    <location>
        <position position="60"/>
    </location>
</feature>
<feature type="modified residue" description="N6-acetyllysine" evidence="5">
    <location>
        <position position="70"/>
    </location>
</feature>
<feature type="modified residue" description="N6-acetyllysine" evidence="5">
    <location>
        <position position="73"/>
    </location>
</feature>
<feature type="modified residue" description="N6-succinyllysine" evidence="5">
    <location>
        <position position="90"/>
    </location>
</feature>
<feature type="modified residue" description="N6-acetyllysine; alternate" evidence="5">
    <location>
        <position position="100"/>
    </location>
</feature>
<feature type="modified residue" description="N6-succinyllysine; alternate" evidence="5">
    <location>
        <position position="100"/>
    </location>
</feature>
<feature type="modified residue" description="N6-acetyllysine; alternate" evidence="5">
    <location>
        <position position="158"/>
    </location>
</feature>
<feature type="modified residue" description="N6-succinyllysine; alternate" evidence="5">
    <location>
        <position position="158"/>
    </location>
</feature>
<feature type="modified residue" description="N6-acetyllysine" evidence="5">
    <location>
        <position position="176"/>
    </location>
</feature>
<feature type="modified residue" description="N6-acetyllysine" evidence="4">
    <location>
        <position position="192"/>
    </location>
</feature>
<feature type="modified residue" description="N6-succinyllysine" evidence="5">
    <location>
        <position position="199"/>
    </location>
</feature>
<gene>
    <name evidence="9" type="primary">Atp5po</name>
    <name type="synonym">Atp5o</name>
</gene>
<accession>Q06647</accession>